<feature type="chain" id="PRO_0000277466" description="Alanyl-tRNA editing protein Aarsd1">
    <location>
        <begin position="1"/>
        <end position="412"/>
    </location>
</feature>
<feature type="binding site" evidence="3">
    <location>
        <position position="109"/>
    </location>
    <ligand>
        <name>Zn(2+)</name>
        <dbReference type="ChEBI" id="CHEBI:29105"/>
    </ligand>
</feature>
<feature type="binding site" evidence="3">
    <location>
        <position position="113"/>
    </location>
    <ligand>
        <name>Zn(2+)</name>
        <dbReference type="ChEBI" id="CHEBI:29105"/>
    </ligand>
</feature>
<feature type="binding site" evidence="3">
    <location>
        <position position="209"/>
    </location>
    <ligand>
        <name>Zn(2+)</name>
        <dbReference type="ChEBI" id="CHEBI:29105"/>
    </ligand>
</feature>
<feature type="binding site" evidence="3">
    <location>
        <position position="213"/>
    </location>
    <ligand>
        <name>Zn(2+)</name>
        <dbReference type="ChEBI" id="CHEBI:29105"/>
    </ligand>
</feature>
<feature type="modified residue" description="Phosphoserine" evidence="2">
    <location>
        <position position="174"/>
    </location>
</feature>
<feature type="sequence conflict" description="In Ref. 1; BAE22937." evidence="5" ref="1">
    <original>D</original>
    <variation>G</variation>
    <location>
        <position position="80"/>
    </location>
</feature>
<feature type="sequence conflict" description="In Ref. 1; BAE40227." evidence="5" ref="1">
    <original>L</original>
    <variation>M</variation>
    <location>
        <position position="175"/>
    </location>
</feature>
<feature type="sequence conflict" description="In Ref. 1; BAE22937." evidence="5" ref="1">
    <original>L</original>
    <variation>H</variation>
    <location>
        <position position="292"/>
    </location>
</feature>
<sequence length="412" mass="44971">MAFLCQRDSYAREFTTTVVSCSPAELQTDASGGKKEVLSGFHVVLEDTLLFPEGGGQPDDRGTINDISVLRVTRRGAQADHFTESPLSPGSQVQVRVDWERRFDHMQQHSGQHLITAVADLLFGLKTTSWELGRLRSVIELDSPSVTAEQVAAIEQSVNQKIRDRLPVSVRELSLDDPEVEQVRGRGLPDDHAGPIRVVTIEGVDSNMCCGTHVSNLSDLQVIKILGTEKGKKNKSNLIFLAGNRVLKWMERSHGSEKALTSLLKCGVEDHVEAVKKLQNATKLLQKNNLNLLRDLAVHTAHSLRSSPAWGGVVTLHRKEGDSEFMNIIANEIGSEETLLFLTVGDEKGAGLFLLAGPAEAVETLGPRVAEVLEGKGAGKKGRFQGKATKMSRRAEAQALLQDYVSTQSAEE</sequence>
<comment type="function">
    <text evidence="4">Functions in trans to edit the amino acid moiety from incorrectly charged Ser-tRNA(Ala).</text>
</comment>
<comment type="cofactor">
    <cofactor evidence="5">
        <name>Zn(2+)</name>
        <dbReference type="ChEBI" id="CHEBI:29105"/>
    </cofactor>
    <text evidence="5">Binds 1 zinc ion per subunit.</text>
</comment>
<comment type="interaction">
    <interactant intactId="EBI-646572">
        <id>Q3THG9</id>
    </interactant>
    <interactant intactId="EBI-488313">
        <id>Q62406-1</id>
        <label>Irak1</label>
    </interactant>
    <organismsDiffer>false</organismsDiffer>
    <experiments>4</experiments>
</comment>
<comment type="subcellular location">
    <subcellularLocation>
        <location evidence="1">Cytoplasm</location>
    </subcellularLocation>
</comment>
<comment type="similarity">
    <text evidence="5">Belongs to the class-II aminoacyl-tRNA synthetase family. Alax-L subfamily.</text>
</comment>
<evidence type="ECO:0000250" key="1"/>
<evidence type="ECO:0000250" key="2">
    <source>
        <dbReference type="UniProtKB" id="Q9BTE6"/>
    </source>
</evidence>
<evidence type="ECO:0000255" key="3"/>
<evidence type="ECO:0000269" key="4">
    <source>
    </source>
</evidence>
<evidence type="ECO:0000305" key="5"/>
<gene>
    <name type="primary">Aarsd1</name>
    <name type="synonym">Alax</name>
</gene>
<dbReference type="EMBL" id="AK078016">
    <property type="protein sequence ID" value="BAC37098.1"/>
    <property type="molecule type" value="mRNA"/>
</dbReference>
<dbReference type="EMBL" id="AK136332">
    <property type="protein sequence ID" value="BAE22937.1"/>
    <property type="molecule type" value="mRNA"/>
</dbReference>
<dbReference type="EMBL" id="AK168281">
    <property type="protein sequence ID" value="BAE40227.1"/>
    <property type="molecule type" value="mRNA"/>
</dbReference>
<dbReference type="EMBL" id="BC005711">
    <property type="protein sequence ID" value="AAH05711.1"/>
    <property type="molecule type" value="mRNA"/>
</dbReference>
<dbReference type="CCDS" id="CCDS25467.1"/>
<dbReference type="RefSeq" id="NP_659078.1">
    <property type="nucleotide sequence ID" value="NM_144829.1"/>
</dbReference>
<dbReference type="SMR" id="Q3THG9"/>
<dbReference type="BioGRID" id="213614">
    <property type="interactions" value="17"/>
</dbReference>
<dbReference type="FunCoup" id="Q3THG9">
    <property type="interactions" value="1768"/>
</dbReference>
<dbReference type="IntAct" id="Q3THG9">
    <property type="interactions" value="1"/>
</dbReference>
<dbReference type="STRING" id="10090.ENSMUSP00000067912"/>
<dbReference type="GlyGen" id="Q3THG9">
    <property type="glycosylation" value="1 site, 1 N-linked glycan (1 site)"/>
</dbReference>
<dbReference type="iPTMnet" id="Q3THG9"/>
<dbReference type="PhosphoSitePlus" id="Q3THG9"/>
<dbReference type="SwissPalm" id="Q3THG9"/>
<dbReference type="jPOST" id="Q3THG9"/>
<dbReference type="PaxDb" id="10090-ENSMUSP00000067912"/>
<dbReference type="PeptideAtlas" id="Q3THG9"/>
<dbReference type="ProteomicsDB" id="285626"/>
<dbReference type="Pumba" id="Q3THG9"/>
<dbReference type="DNASU" id="69684"/>
<dbReference type="Ensembl" id="ENSMUST00000070395.9">
    <property type="protein sequence ID" value="ENSMUSP00000067912.9"/>
    <property type="gene ID" value="ENSMUSG00000075528.14"/>
</dbReference>
<dbReference type="GeneID" id="69684"/>
<dbReference type="KEGG" id="mmu:69684"/>
<dbReference type="UCSC" id="uc007los.1">
    <property type="organism name" value="mouse"/>
</dbReference>
<dbReference type="AGR" id="MGI:1916934"/>
<dbReference type="CTD" id="80755"/>
<dbReference type="MGI" id="MGI:1916934">
    <property type="gene designation" value="Aarsd1"/>
</dbReference>
<dbReference type="VEuPathDB" id="HostDB:ENSMUSG00000075528"/>
<dbReference type="eggNOG" id="KOG2105">
    <property type="taxonomic scope" value="Eukaryota"/>
</dbReference>
<dbReference type="GeneTree" id="ENSGT00940000156241"/>
<dbReference type="HOGENOM" id="CLU_004485_7_0_1"/>
<dbReference type="InParanoid" id="Q3THG9"/>
<dbReference type="OMA" id="KYDTTSW"/>
<dbReference type="OrthoDB" id="288942at2759"/>
<dbReference type="PhylomeDB" id="Q3THG9"/>
<dbReference type="TreeFam" id="TF323735"/>
<dbReference type="BioGRID-ORCS" id="69684">
    <property type="hits" value="4 hits in 77 CRISPR screens"/>
</dbReference>
<dbReference type="ChiTaRS" id="Aarsd1">
    <property type="organism name" value="mouse"/>
</dbReference>
<dbReference type="PRO" id="PR:Q3THG9"/>
<dbReference type="Proteomes" id="UP000000589">
    <property type="component" value="Chromosome 11"/>
</dbReference>
<dbReference type="RNAct" id="Q3THG9">
    <property type="molecule type" value="protein"/>
</dbReference>
<dbReference type="Bgee" id="ENSMUSG00000075528">
    <property type="expression patterns" value="Expressed in proximal tubule and 66 other cell types or tissues"/>
</dbReference>
<dbReference type="GO" id="GO:0005737">
    <property type="term" value="C:cytoplasm"/>
    <property type="evidence" value="ECO:0007669"/>
    <property type="project" value="UniProtKB-SubCell"/>
</dbReference>
<dbReference type="GO" id="GO:0004813">
    <property type="term" value="F:alanine-tRNA ligase activity"/>
    <property type="evidence" value="ECO:0007669"/>
    <property type="project" value="InterPro"/>
</dbReference>
<dbReference type="GO" id="GO:0002161">
    <property type="term" value="F:aminoacyl-tRNA deacylase activity"/>
    <property type="evidence" value="ECO:0000314"/>
    <property type="project" value="UniProtKB"/>
</dbReference>
<dbReference type="GO" id="GO:0005524">
    <property type="term" value="F:ATP binding"/>
    <property type="evidence" value="ECO:0007669"/>
    <property type="project" value="InterPro"/>
</dbReference>
<dbReference type="GO" id="GO:0046872">
    <property type="term" value="F:metal ion binding"/>
    <property type="evidence" value="ECO:0007669"/>
    <property type="project" value="UniProtKB-KW"/>
</dbReference>
<dbReference type="GO" id="GO:0003676">
    <property type="term" value="F:nucleic acid binding"/>
    <property type="evidence" value="ECO:0007669"/>
    <property type="project" value="InterPro"/>
</dbReference>
<dbReference type="GO" id="GO:0002196">
    <property type="term" value="F:Ser-tRNA(Ala) deacylase activity"/>
    <property type="evidence" value="ECO:0000314"/>
    <property type="project" value="MGI"/>
</dbReference>
<dbReference type="GO" id="GO:0006419">
    <property type="term" value="P:alanyl-tRNA aminoacylation"/>
    <property type="evidence" value="ECO:0007669"/>
    <property type="project" value="InterPro"/>
</dbReference>
<dbReference type="GO" id="GO:0006450">
    <property type="term" value="P:regulation of translational fidelity"/>
    <property type="evidence" value="ECO:0000314"/>
    <property type="project" value="MGI"/>
</dbReference>
<dbReference type="FunFam" id="3.30.980.10:FF:000007">
    <property type="entry name" value="alanyl-tRNA editing protein Aarsd1"/>
    <property type="match status" value="1"/>
</dbReference>
<dbReference type="FunFam" id="2.40.30.130:FF:000012">
    <property type="entry name" value="Predicted gene, 27029"/>
    <property type="match status" value="1"/>
</dbReference>
<dbReference type="Gene3D" id="2.40.30.130">
    <property type="match status" value="1"/>
</dbReference>
<dbReference type="Gene3D" id="3.30.980.10">
    <property type="entry name" value="Threonyl-trna Synthetase, Chain A, domain 2"/>
    <property type="match status" value="1"/>
</dbReference>
<dbReference type="InterPro" id="IPR018165">
    <property type="entry name" value="Ala-tRNA-synth_IIc_core"/>
</dbReference>
<dbReference type="InterPro" id="IPR051335">
    <property type="entry name" value="Alanyl-tRNA_Editing_Enzymes"/>
</dbReference>
<dbReference type="InterPro" id="IPR018163">
    <property type="entry name" value="Thr/Ala-tRNA-synth_IIc_edit"/>
</dbReference>
<dbReference type="InterPro" id="IPR009000">
    <property type="entry name" value="Transl_B-barrel_sf"/>
</dbReference>
<dbReference type="InterPro" id="IPR012947">
    <property type="entry name" value="tRNA_SAD"/>
</dbReference>
<dbReference type="PANTHER" id="PTHR43462">
    <property type="entry name" value="ALANYL-TRNA EDITING PROTEIN"/>
    <property type="match status" value="1"/>
</dbReference>
<dbReference type="PANTHER" id="PTHR43462:SF1">
    <property type="entry name" value="ALANYL-TRNA EDITING PROTEIN AARSD1"/>
    <property type="match status" value="1"/>
</dbReference>
<dbReference type="Pfam" id="PF07973">
    <property type="entry name" value="tRNA_SAD"/>
    <property type="match status" value="1"/>
</dbReference>
<dbReference type="SMART" id="SM00863">
    <property type="entry name" value="tRNA_SAD"/>
    <property type="match status" value="1"/>
</dbReference>
<dbReference type="SUPFAM" id="SSF55186">
    <property type="entry name" value="ThrRS/AlaRS common domain"/>
    <property type="match status" value="1"/>
</dbReference>
<dbReference type="SUPFAM" id="SSF50447">
    <property type="entry name" value="Translation proteins"/>
    <property type="match status" value="1"/>
</dbReference>
<dbReference type="PROSITE" id="PS50860">
    <property type="entry name" value="AA_TRNA_LIGASE_II_ALA"/>
    <property type="match status" value="1"/>
</dbReference>
<reference key="1">
    <citation type="journal article" date="2005" name="Science">
        <title>The transcriptional landscape of the mammalian genome.</title>
        <authorList>
            <person name="Carninci P."/>
            <person name="Kasukawa T."/>
            <person name="Katayama S."/>
            <person name="Gough J."/>
            <person name="Frith M.C."/>
            <person name="Maeda N."/>
            <person name="Oyama R."/>
            <person name="Ravasi T."/>
            <person name="Lenhard B."/>
            <person name="Wells C."/>
            <person name="Kodzius R."/>
            <person name="Shimokawa K."/>
            <person name="Bajic V.B."/>
            <person name="Brenner S.E."/>
            <person name="Batalov S."/>
            <person name="Forrest A.R."/>
            <person name="Zavolan M."/>
            <person name="Davis M.J."/>
            <person name="Wilming L.G."/>
            <person name="Aidinis V."/>
            <person name="Allen J.E."/>
            <person name="Ambesi-Impiombato A."/>
            <person name="Apweiler R."/>
            <person name="Aturaliya R.N."/>
            <person name="Bailey T.L."/>
            <person name="Bansal M."/>
            <person name="Baxter L."/>
            <person name="Beisel K.W."/>
            <person name="Bersano T."/>
            <person name="Bono H."/>
            <person name="Chalk A.M."/>
            <person name="Chiu K.P."/>
            <person name="Choudhary V."/>
            <person name="Christoffels A."/>
            <person name="Clutterbuck D.R."/>
            <person name="Crowe M.L."/>
            <person name="Dalla E."/>
            <person name="Dalrymple B.P."/>
            <person name="de Bono B."/>
            <person name="Della Gatta G."/>
            <person name="di Bernardo D."/>
            <person name="Down T."/>
            <person name="Engstrom P."/>
            <person name="Fagiolini M."/>
            <person name="Faulkner G."/>
            <person name="Fletcher C.F."/>
            <person name="Fukushima T."/>
            <person name="Furuno M."/>
            <person name="Futaki S."/>
            <person name="Gariboldi M."/>
            <person name="Georgii-Hemming P."/>
            <person name="Gingeras T.R."/>
            <person name="Gojobori T."/>
            <person name="Green R.E."/>
            <person name="Gustincich S."/>
            <person name="Harbers M."/>
            <person name="Hayashi Y."/>
            <person name="Hensch T.K."/>
            <person name="Hirokawa N."/>
            <person name="Hill D."/>
            <person name="Huminiecki L."/>
            <person name="Iacono M."/>
            <person name="Ikeo K."/>
            <person name="Iwama A."/>
            <person name="Ishikawa T."/>
            <person name="Jakt M."/>
            <person name="Kanapin A."/>
            <person name="Katoh M."/>
            <person name="Kawasawa Y."/>
            <person name="Kelso J."/>
            <person name="Kitamura H."/>
            <person name="Kitano H."/>
            <person name="Kollias G."/>
            <person name="Krishnan S.P."/>
            <person name="Kruger A."/>
            <person name="Kummerfeld S.K."/>
            <person name="Kurochkin I.V."/>
            <person name="Lareau L.F."/>
            <person name="Lazarevic D."/>
            <person name="Lipovich L."/>
            <person name="Liu J."/>
            <person name="Liuni S."/>
            <person name="McWilliam S."/>
            <person name="Madan Babu M."/>
            <person name="Madera M."/>
            <person name="Marchionni L."/>
            <person name="Matsuda H."/>
            <person name="Matsuzawa S."/>
            <person name="Miki H."/>
            <person name="Mignone F."/>
            <person name="Miyake S."/>
            <person name="Morris K."/>
            <person name="Mottagui-Tabar S."/>
            <person name="Mulder N."/>
            <person name="Nakano N."/>
            <person name="Nakauchi H."/>
            <person name="Ng P."/>
            <person name="Nilsson R."/>
            <person name="Nishiguchi S."/>
            <person name="Nishikawa S."/>
            <person name="Nori F."/>
            <person name="Ohara O."/>
            <person name="Okazaki Y."/>
            <person name="Orlando V."/>
            <person name="Pang K.C."/>
            <person name="Pavan W.J."/>
            <person name="Pavesi G."/>
            <person name="Pesole G."/>
            <person name="Petrovsky N."/>
            <person name="Piazza S."/>
            <person name="Reed J."/>
            <person name="Reid J.F."/>
            <person name="Ring B.Z."/>
            <person name="Ringwald M."/>
            <person name="Rost B."/>
            <person name="Ruan Y."/>
            <person name="Salzberg S.L."/>
            <person name="Sandelin A."/>
            <person name="Schneider C."/>
            <person name="Schoenbach C."/>
            <person name="Sekiguchi K."/>
            <person name="Semple C.A."/>
            <person name="Seno S."/>
            <person name="Sessa L."/>
            <person name="Sheng Y."/>
            <person name="Shibata Y."/>
            <person name="Shimada H."/>
            <person name="Shimada K."/>
            <person name="Silva D."/>
            <person name="Sinclair B."/>
            <person name="Sperling S."/>
            <person name="Stupka E."/>
            <person name="Sugiura K."/>
            <person name="Sultana R."/>
            <person name="Takenaka Y."/>
            <person name="Taki K."/>
            <person name="Tammoja K."/>
            <person name="Tan S.L."/>
            <person name="Tang S."/>
            <person name="Taylor M.S."/>
            <person name="Tegner J."/>
            <person name="Teichmann S.A."/>
            <person name="Ueda H.R."/>
            <person name="van Nimwegen E."/>
            <person name="Verardo R."/>
            <person name="Wei C.L."/>
            <person name="Yagi K."/>
            <person name="Yamanishi H."/>
            <person name="Zabarovsky E."/>
            <person name="Zhu S."/>
            <person name="Zimmer A."/>
            <person name="Hide W."/>
            <person name="Bult C."/>
            <person name="Grimmond S.M."/>
            <person name="Teasdale R.D."/>
            <person name="Liu E.T."/>
            <person name="Brusic V."/>
            <person name="Quackenbush J."/>
            <person name="Wahlestedt C."/>
            <person name="Mattick J.S."/>
            <person name="Hume D.A."/>
            <person name="Kai C."/>
            <person name="Sasaki D."/>
            <person name="Tomaru Y."/>
            <person name="Fukuda S."/>
            <person name="Kanamori-Katayama M."/>
            <person name="Suzuki M."/>
            <person name="Aoki J."/>
            <person name="Arakawa T."/>
            <person name="Iida J."/>
            <person name="Imamura K."/>
            <person name="Itoh M."/>
            <person name="Kato T."/>
            <person name="Kawaji H."/>
            <person name="Kawagashira N."/>
            <person name="Kawashima T."/>
            <person name="Kojima M."/>
            <person name="Kondo S."/>
            <person name="Konno H."/>
            <person name="Nakano K."/>
            <person name="Ninomiya N."/>
            <person name="Nishio T."/>
            <person name="Okada M."/>
            <person name="Plessy C."/>
            <person name="Shibata K."/>
            <person name="Shiraki T."/>
            <person name="Suzuki S."/>
            <person name="Tagami M."/>
            <person name="Waki K."/>
            <person name="Watahiki A."/>
            <person name="Okamura-Oho Y."/>
            <person name="Suzuki H."/>
            <person name="Kawai J."/>
            <person name="Hayashizaki Y."/>
        </authorList>
    </citation>
    <scope>NUCLEOTIDE SEQUENCE [LARGE SCALE MRNA]</scope>
    <source>
        <strain>BALB/cJ</strain>
        <strain>C57BL/6J</strain>
        <tissue>Embryonic head</tissue>
        <tissue>Embryonic testis</tissue>
    </source>
</reference>
<reference key="2">
    <citation type="journal article" date="2004" name="Genome Res.">
        <title>The status, quality, and expansion of the NIH full-length cDNA project: the Mammalian Gene Collection (MGC).</title>
        <authorList>
            <consortium name="The MGC Project Team"/>
        </authorList>
    </citation>
    <scope>NUCLEOTIDE SEQUENCE [LARGE SCALE MRNA]</scope>
    <source>
        <strain>FVB/N</strain>
        <tissue>Mammary gland</tissue>
    </source>
</reference>
<reference key="3">
    <citation type="journal article" date="2008" name="Nature">
        <title>Distinct domains of tRNA synthetase recognize the same base pair.</title>
        <authorList>
            <person name="Beebe K."/>
            <person name="Mock M."/>
            <person name="Merriman E."/>
            <person name="Schimmel P."/>
        </authorList>
    </citation>
    <scope>FUNCTION AS TRNA(ALA) EDITING PROTEIN</scope>
</reference>
<reference key="4">
    <citation type="journal article" date="2010" name="Cell">
        <title>A tissue-specific atlas of mouse protein phosphorylation and expression.</title>
        <authorList>
            <person name="Huttlin E.L."/>
            <person name="Jedrychowski M.P."/>
            <person name="Elias J.E."/>
            <person name="Goswami T."/>
            <person name="Rad R."/>
            <person name="Beausoleil S.A."/>
            <person name="Villen J."/>
            <person name="Haas W."/>
            <person name="Sowa M.E."/>
            <person name="Gygi S.P."/>
        </authorList>
    </citation>
    <scope>IDENTIFICATION BY MASS SPECTROMETRY [LARGE SCALE ANALYSIS]</scope>
    <source>
        <tissue>Brain</tissue>
        <tissue>Kidney</tissue>
        <tissue>Pancreas</tissue>
        <tissue>Spleen</tissue>
        <tissue>Testis</tissue>
    </source>
</reference>
<keyword id="KW-0963">Cytoplasm</keyword>
<keyword id="KW-0479">Metal-binding</keyword>
<keyword id="KW-0597">Phosphoprotein</keyword>
<keyword id="KW-0648">Protein biosynthesis</keyword>
<keyword id="KW-1185">Reference proteome</keyword>
<keyword id="KW-0862">Zinc</keyword>
<proteinExistence type="evidence at protein level"/>
<organism>
    <name type="scientific">Mus musculus</name>
    <name type="common">Mouse</name>
    <dbReference type="NCBI Taxonomy" id="10090"/>
    <lineage>
        <taxon>Eukaryota</taxon>
        <taxon>Metazoa</taxon>
        <taxon>Chordata</taxon>
        <taxon>Craniata</taxon>
        <taxon>Vertebrata</taxon>
        <taxon>Euteleostomi</taxon>
        <taxon>Mammalia</taxon>
        <taxon>Eutheria</taxon>
        <taxon>Euarchontoglires</taxon>
        <taxon>Glires</taxon>
        <taxon>Rodentia</taxon>
        <taxon>Myomorpha</taxon>
        <taxon>Muroidea</taxon>
        <taxon>Muridae</taxon>
        <taxon>Murinae</taxon>
        <taxon>Mus</taxon>
        <taxon>Mus</taxon>
    </lineage>
</organism>
<protein>
    <recommendedName>
        <fullName>Alanyl-tRNA editing protein Aarsd1</fullName>
    </recommendedName>
    <alternativeName>
        <fullName>Alanyl-tRNA deacylase alaX</fullName>
        <shortName>AlaX</shortName>
        <shortName>AlaXp-II</shortName>
    </alternativeName>
    <alternativeName>
        <fullName>Alanyl-tRNA synthetase domain-containing protein 1</fullName>
    </alternativeName>
</protein>
<accession>Q3THG9</accession>
<accession>Q3UWH8</accession>
<accession>Q8BVJ6</accession>
<accession>Q99JS9</accession>
<name>AASD1_MOUSE</name>